<feature type="chain" id="PRO_0000344591" description="L-rhamnose mutarotase">
    <location>
        <begin position="1"/>
        <end position="104"/>
    </location>
</feature>
<feature type="active site" description="Proton donor" evidence="1">
    <location>
        <position position="22"/>
    </location>
</feature>
<feature type="binding site" evidence="1">
    <location>
        <position position="18"/>
    </location>
    <ligand>
        <name>substrate</name>
    </ligand>
</feature>
<feature type="binding site" evidence="1">
    <location>
        <position position="41"/>
    </location>
    <ligand>
        <name>substrate</name>
    </ligand>
</feature>
<feature type="binding site" evidence="1">
    <location>
        <begin position="76"/>
        <end position="77"/>
    </location>
    <ligand>
        <name>substrate</name>
    </ligand>
</feature>
<accession>B1ZR75</accession>
<evidence type="ECO:0000255" key="1">
    <source>
        <dbReference type="HAMAP-Rule" id="MF_01663"/>
    </source>
</evidence>
<keyword id="KW-0119">Carbohydrate metabolism</keyword>
<keyword id="KW-0963">Cytoplasm</keyword>
<keyword id="KW-0413">Isomerase</keyword>
<keyword id="KW-1185">Reference proteome</keyword>
<keyword id="KW-0684">Rhamnose metabolism</keyword>
<reference key="1">
    <citation type="journal article" date="2011" name="J. Bacteriol.">
        <title>Genome sequence of the verrucomicrobium Opitutus terrae PB90-1, an abundant inhabitant of rice paddy soil ecosystems.</title>
        <authorList>
            <person name="van Passel M.W."/>
            <person name="Kant R."/>
            <person name="Palva A."/>
            <person name="Copeland A."/>
            <person name="Lucas S."/>
            <person name="Lapidus A."/>
            <person name="Glavina del Rio T."/>
            <person name="Pitluck S."/>
            <person name="Goltsman E."/>
            <person name="Clum A."/>
            <person name="Sun H."/>
            <person name="Schmutz J."/>
            <person name="Larimer F.W."/>
            <person name="Land M.L."/>
            <person name="Hauser L."/>
            <person name="Kyrpides N."/>
            <person name="Mikhailova N."/>
            <person name="Richardson P.P."/>
            <person name="Janssen P.H."/>
            <person name="de Vos W.M."/>
            <person name="Smidt H."/>
        </authorList>
    </citation>
    <scope>NUCLEOTIDE SEQUENCE [LARGE SCALE GENOMIC DNA]</scope>
    <source>
        <strain>DSM 11246 / JCM 15787 / PB90-1</strain>
    </source>
</reference>
<name>RHAM_OPITP</name>
<gene>
    <name evidence="1" type="primary">rhaM</name>
    <name type="ordered locus">Oter_1358</name>
</gene>
<organism>
    <name type="scientific">Opitutus terrae (strain DSM 11246 / JCM 15787 / PB90-1)</name>
    <dbReference type="NCBI Taxonomy" id="452637"/>
    <lineage>
        <taxon>Bacteria</taxon>
        <taxon>Pseudomonadati</taxon>
        <taxon>Verrucomicrobiota</taxon>
        <taxon>Opitutia</taxon>
        <taxon>Opitutales</taxon>
        <taxon>Opitutaceae</taxon>
        <taxon>Opitutus</taxon>
    </lineage>
</organism>
<comment type="function">
    <text evidence="1">Involved in the anomeric conversion of L-rhamnose.</text>
</comment>
<comment type="catalytic activity">
    <reaction evidence="1">
        <text>alpha-L-rhamnose = beta-L-rhamnose</text>
        <dbReference type="Rhea" id="RHEA:25584"/>
        <dbReference type="ChEBI" id="CHEBI:27586"/>
        <dbReference type="ChEBI" id="CHEBI:27907"/>
        <dbReference type="EC" id="5.1.3.32"/>
    </reaction>
</comment>
<comment type="pathway">
    <text evidence="1">Carbohydrate metabolism; L-rhamnose metabolism.</text>
</comment>
<comment type="subunit">
    <text evidence="1">Homodimer.</text>
</comment>
<comment type="subcellular location">
    <subcellularLocation>
        <location evidence="1">Cytoplasm</location>
    </subcellularLocation>
</comment>
<comment type="similarity">
    <text evidence="1">Belongs to the rhamnose mutarotase family.</text>
</comment>
<protein>
    <recommendedName>
        <fullName evidence="1">L-rhamnose mutarotase</fullName>
        <ecNumber evidence="1">5.1.3.32</ecNumber>
    </recommendedName>
    <alternativeName>
        <fullName evidence="1">Rhamnose 1-epimerase</fullName>
    </alternativeName>
    <alternativeName>
        <fullName evidence="1">Type-3 mutarotase</fullName>
    </alternativeName>
</protein>
<proteinExistence type="inferred from homology"/>
<sequence>MIRKAFVMSVNAGCEAEYERRHRPIWAELAQVLKAHGVHNYSIFLHPQTRQLFGYVEIEDEARWAAIARTPECQRWWKHMGDVMPSNPDFSPVSADLREVFHLD</sequence>
<dbReference type="EC" id="5.1.3.32" evidence="1"/>
<dbReference type="EMBL" id="CP001032">
    <property type="protein sequence ID" value="ACB74643.1"/>
    <property type="molecule type" value="Genomic_DNA"/>
</dbReference>
<dbReference type="RefSeq" id="WP_012374181.1">
    <property type="nucleotide sequence ID" value="NC_010571.1"/>
</dbReference>
<dbReference type="SMR" id="B1ZR75"/>
<dbReference type="STRING" id="452637.Oter_1358"/>
<dbReference type="KEGG" id="ote:Oter_1358"/>
<dbReference type="eggNOG" id="COG3254">
    <property type="taxonomic scope" value="Bacteria"/>
</dbReference>
<dbReference type="HOGENOM" id="CLU_100689_2_0_0"/>
<dbReference type="OrthoDB" id="9799608at2"/>
<dbReference type="UniPathway" id="UPA00125"/>
<dbReference type="Proteomes" id="UP000007013">
    <property type="component" value="Chromosome"/>
</dbReference>
<dbReference type="GO" id="GO:0005737">
    <property type="term" value="C:cytoplasm"/>
    <property type="evidence" value="ECO:0007669"/>
    <property type="project" value="UniProtKB-SubCell"/>
</dbReference>
<dbReference type="GO" id="GO:0062192">
    <property type="term" value="F:L-rhamnose mutarotase activity"/>
    <property type="evidence" value="ECO:0007669"/>
    <property type="project" value="UniProtKB-EC"/>
</dbReference>
<dbReference type="GO" id="GO:0019301">
    <property type="term" value="P:rhamnose catabolic process"/>
    <property type="evidence" value="ECO:0007669"/>
    <property type="project" value="TreeGrafter"/>
</dbReference>
<dbReference type="Gene3D" id="3.30.70.100">
    <property type="match status" value="1"/>
</dbReference>
<dbReference type="HAMAP" id="MF_01663">
    <property type="entry name" value="L_rham_rotase"/>
    <property type="match status" value="1"/>
</dbReference>
<dbReference type="InterPro" id="IPR011008">
    <property type="entry name" value="Dimeric_a/b-barrel"/>
</dbReference>
<dbReference type="InterPro" id="IPR013448">
    <property type="entry name" value="L-rhamnose_mutarotase"/>
</dbReference>
<dbReference type="InterPro" id="IPR008000">
    <property type="entry name" value="Rham/fucose_mutarotase"/>
</dbReference>
<dbReference type="NCBIfam" id="TIGR02625">
    <property type="entry name" value="YiiL_rotase"/>
    <property type="match status" value="1"/>
</dbReference>
<dbReference type="PANTHER" id="PTHR34389">
    <property type="entry name" value="L-RHAMNOSE MUTAROTASE"/>
    <property type="match status" value="1"/>
</dbReference>
<dbReference type="PANTHER" id="PTHR34389:SF2">
    <property type="entry name" value="L-RHAMNOSE MUTAROTASE"/>
    <property type="match status" value="1"/>
</dbReference>
<dbReference type="Pfam" id="PF05336">
    <property type="entry name" value="rhaM"/>
    <property type="match status" value="1"/>
</dbReference>
<dbReference type="SUPFAM" id="SSF54909">
    <property type="entry name" value="Dimeric alpha+beta barrel"/>
    <property type="match status" value="1"/>
</dbReference>